<name>URE2_BACSU</name>
<sequence length="124" mass="13644">MKPGAFQIAEGTITINEGREIREVTVKNTGSRSIQVGSHFHFAEANGALLFDRELAIGMRLDVPSGTSVRFEPGEQKTVSLVEIRGRKTIRGLNGMADTFIDERGKEKTLANLKQAGWMEGVIR</sequence>
<proteinExistence type="evidence at protein level"/>
<reference key="1">
    <citation type="journal article" date="1997" name="J. Bacteriol.">
        <title>The Bacillus subtilis ureABC operon.</title>
        <authorList>
            <person name="Cruz-Ramos H."/>
            <person name="Glaser P."/>
            <person name="Wray L.V. Jr."/>
            <person name="Fisher S.H."/>
        </authorList>
    </citation>
    <scope>NUCLEOTIDE SEQUENCE [GENOMIC DNA]</scope>
    <scope>CATALYTIC ACTIVITY</scope>
    <source>
        <strain>168</strain>
    </source>
</reference>
<reference key="2">
    <citation type="journal article" date="1997" name="Nature">
        <title>The complete genome sequence of the Gram-positive bacterium Bacillus subtilis.</title>
        <authorList>
            <person name="Kunst F."/>
            <person name="Ogasawara N."/>
            <person name="Moszer I."/>
            <person name="Albertini A.M."/>
            <person name="Alloni G."/>
            <person name="Azevedo V."/>
            <person name="Bertero M.G."/>
            <person name="Bessieres P."/>
            <person name="Bolotin A."/>
            <person name="Borchert S."/>
            <person name="Borriss R."/>
            <person name="Boursier L."/>
            <person name="Brans A."/>
            <person name="Braun M."/>
            <person name="Brignell S.C."/>
            <person name="Bron S."/>
            <person name="Brouillet S."/>
            <person name="Bruschi C.V."/>
            <person name="Caldwell B."/>
            <person name="Capuano V."/>
            <person name="Carter N.M."/>
            <person name="Choi S.-K."/>
            <person name="Codani J.-J."/>
            <person name="Connerton I.F."/>
            <person name="Cummings N.J."/>
            <person name="Daniel R.A."/>
            <person name="Denizot F."/>
            <person name="Devine K.M."/>
            <person name="Duesterhoeft A."/>
            <person name="Ehrlich S.D."/>
            <person name="Emmerson P.T."/>
            <person name="Entian K.-D."/>
            <person name="Errington J."/>
            <person name="Fabret C."/>
            <person name="Ferrari E."/>
            <person name="Foulger D."/>
            <person name="Fritz C."/>
            <person name="Fujita M."/>
            <person name="Fujita Y."/>
            <person name="Fuma S."/>
            <person name="Galizzi A."/>
            <person name="Galleron N."/>
            <person name="Ghim S.-Y."/>
            <person name="Glaser P."/>
            <person name="Goffeau A."/>
            <person name="Golightly E.J."/>
            <person name="Grandi G."/>
            <person name="Guiseppi G."/>
            <person name="Guy B.J."/>
            <person name="Haga K."/>
            <person name="Haiech J."/>
            <person name="Harwood C.R."/>
            <person name="Henaut A."/>
            <person name="Hilbert H."/>
            <person name="Holsappel S."/>
            <person name="Hosono S."/>
            <person name="Hullo M.-F."/>
            <person name="Itaya M."/>
            <person name="Jones L.-M."/>
            <person name="Joris B."/>
            <person name="Karamata D."/>
            <person name="Kasahara Y."/>
            <person name="Klaerr-Blanchard M."/>
            <person name="Klein C."/>
            <person name="Kobayashi Y."/>
            <person name="Koetter P."/>
            <person name="Koningstein G."/>
            <person name="Krogh S."/>
            <person name="Kumano M."/>
            <person name="Kurita K."/>
            <person name="Lapidus A."/>
            <person name="Lardinois S."/>
            <person name="Lauber J."/>
            <person name="Lazarevic V."/>
            <person name="Lee S.-M."/>
            <person name="Levine A."/>
            <person name="Liu H."/>
            <person name="Masuda S."/>
            <person name="Mauel C."/>
            <person name="Medigue C."/>
            <person name="Medina N."/>
            <person name="Mellado R.P."/>
            <person name="Mizuno M."/>
            <person name="Moestl D."/>
            <person name="Nakai S."/>
            <person name="Noback M."/>
            <person name="Noone D."/>
            <person name="O'Reilly M."/>
            <person name="Ogawa K."/>
            <person name="Ogiwara A."/>
            <person name="Oudega B."/>
            <person name="Park S.-H."/>
            <person name="Parro V."/>
            <person name="Pohl T.M."/>
            <person name="Portetelle D."/>
            <person name="Porwollik S."/>
            <person name="Prescott A.M."/>
            <person name="Presecan E."/>
            <person name="Pujic P."/>
            <person name="Purnelle B."/>
            <person name="Rapoport G."/>
            <person name="Rey M."/>
            <person name="Reynolds S."/>
            <person name="Rieger M."/>
            <person name="Rivolta C."/>
            <person name="Rocha E."/>
            <person name="Roche B."/>
            <person name="Rose M."/>
            <person name="Sadaie Y."/>
            <person name="Sato T."/>
            <person name="Scanlan E."/>
            <person name="Schleich S."/>
            <person name="Schroeter R."/>
            <person name="Scoffone F."/>
            <person name="Sekiguchi J."/>
            <person name="Sekowska A."/>
            <person name="Seror S.J."/>
            <person name="Serror P."/>
            <person name="Shin B.-S."/>
            <person name="Soldo B."/>
            <person name="Sorokin A."/>
            <person name="Tacconi E."/>
            <person name="Takagi T."/>
            <person name="Takahashi H."/>
            <person name="Takemaru K."/>
            <person name="Takeuchi M."/>
            <person name="Tamakoshi A."/>
            <person name="Tanaka T."/>
            <person name="Terpstra P."/>
            <person name="Tognoni A."/>
            <person name="Tosato V."/>
            <person name="Uchiyama S."/>
            <person name="Vandenbol M."/>
            <person name="Vannier F."/>
            <person name="Vassarotti A."/>
            <person name="Viari A."/>
            <person name="Wambutt R."/>
            <person name="Wedler E."/>
            <person name="Wedler H."/>
            <person name="Weitzenegger T."/>
            <person name="Winters P."/>
            <person name="Wipat A."/>
            <person name="Yamamoto H."/>
            <person name="Yamane K."/>
            <person name="Yasumoto K."/>
            <person name="Yata K."/>
            <person name="Yoshida K."/>
            <person name="Yoshikawa H.-F."/>
            <person name="Zumstein E."/>
            <person name="Yoshikawa H."/>
            <person name="Danchin A."/>
        </authorList>
    </citation>
    <scope>NUCLEOTIDE SEQUENCE [LARGE SCALE GENOMIC DNA]</scope>
    <source>
        <strain>168</strain>
    </source>
</reference>
<reference key="3">
    <citation type="journal article" date="2005" name="J. Bacteriol.">
        <title>Biosynthesis of active Bacillus subtilis urease in the absence of known urease accessory proteins.</title>
        <authorList>
            <person name="Kim J.K."/>
            <person name="Mulrooney S.B."/>
            <person name="Hausinger R.P."/>
        </authorList>
    </citation>
    <scope>CATALYTIC ACTIVITY</scope>
</reference>
<gene>
    <name evidence="1" type="primary">ureB</name>
    <name type="ordered locus">BSU36650</name>
</gene>
<comment type="catalytic activity">
    <reaction evidence="1 2 3">
        <text>urea + 2 H2O + H(+) = hydrogencarbonate + 2 NH4(+)</text>
        <dbReference type="Rhea" id="RHEA:20557"/>
        <dbReference type="ChEBI" id="CHEBI:15377"/>
        <dbReference type="ChEBI" id="CHEBI:15378"/>
        <dbReference type="ChEBI" id="CHEBI:16199"/>
        <dbReference type="ChEBI" id="CHEBI:17544"/>
        <dbReference type="ChEBI" id="CHEBI:28938"/>
        <dbReference type="EC" id="3.5.1.5"/>
    </reaction>
</comment>
<comment type="pathway">
    <text evidence="1">Nitrogen metabolism; urea degradation; CO(2) and NH(3) from urea (urease route): step 1/1.</text>
</comment>
<comment type="subunit">
    <text evidence="1">Heterotrimer of UreA (gamma), UreB (beta) and UreC (alpha) subunits. Three heterotrimers associate to form the active enzyme.</text>
</comment>
<comment type="subcellular location">
    <subcellularLocation>
        <location evidence="1">Cytoplasm</location>
    </subcellularLocation>
</comment>
<comment type="similarity">
    <text evidence="1">Belongs to the urease beta subunit family.</text>
</comment>
<feature type="chain" id="PRO_0000067571" description="Urease subunit beta">
    <location>
        <begin position="1"/>
        <end position="124"/>
    </location>
</feature>
<evidence type="ECO:0000255" key="1">
    <source>
        <dbReference type="HAMAP-Rule" id="MF_01954"/>
    </source>
</evidence>
<evidence type="ECO:0000269" key="2">
    <source>
    </source>
</evidence>
<evidence type="ECO:0000269" key="3">
    <source>
    </source>
</evidence>
<dbReference type="EC" id="3.5.1.5" evidence="1"/>
<dbReference type="EMBL" id="Y08559">
    <property type="protein sequence ID" value="CAA69858.1"/>
    <property type="molecule type" value="Genomic_DNA"/>
</dbReference>
<dbReference type="EMBL" id="AL009126">
    <property type="protein sequence ID" value="CAB15682.1"/>
    <property type="molecule type" value="Genomic_DNA"/>
</dbReference>
<dbReference type="PIR" id="C69729">
    <property type="entry name" value="C69729"/>
</dbReference>
<dbReference type="RefSeq" id="NP_391546.1">
    <property type="nucleotide sequence ID" value="NC_000964.3"/>
</dbReference>
<dbReference type="RefSeq" id="WP_003227726.1">
    <property type="nucleotide sequence ID" value="NZ_OZ025638.1"/>
</dbReference>
<dbReference type="SMR" id="P71035"/>
<dbReference type="FunCoup" id="P71035">
    <property type="interactions" value="88"/>
</dbReference>
<dbReference type="STRING" id="224308.BSU36650"/>
<dbReference type="PaxDb" id="224308-BSU36650"/>
<dbReference type="EnsemblBacteria" id="CAB15682">
    <property type="protein sequence ID" value="CAB15682"/>
    <property type="gene ID" value="BSU_36650"/>
</dbReference>
<dbReference type="GeneID" id="936967"/>
<dbReference type="KEGG" id="bsu:BSU36650"/>
<dbReference type="PATRIC" id="fig|224308.179.peg.3966"/>
<dbReference type="eggNOG" id="COG0832">
    <property type="taxonomic scope" value="Bacteria"/>
</dbReference>
<dbReference type="InParanoid" id="P71035"/>
<dbReference type="OrthoDB" id="9797217at2"/>
<dbReference type="PhylomeDB" id="P71035"/>
<dbReference type="BioCyc" id="BSUB:BSU36650-MONOMER"/>
<dbReference type="UniPathway" id="UPA00258">
    <property type="reaction ID" value="UER00370"/>
</dbReference>
<dbReference type="Proteomes" id="UP000001570">
    <property type="component" value="Chromosome"/>
</dbReference>
<dbReference type="GO" id="GO:0035550">
    <property type="term" value="C:urease complex"/>
    <property type="evidence" value="ECO:0007669"/>
    <property type="project" value="InterPro"/>
</dbReference>
<dbReference type="GO" id="GO:0009039">
    <property type="term" value="F:urease activity"/>
    <property type="evidence" value="ECO:0000318"/>
    <property type="project" value="GO_Central"/>
</dbReference>
<dbReference type="GO" id="GO:0043419">
    <property type="term" value="P:urea catabolic process"/>
    <property type="evidence" value="ECO:0000318"/>
    <property type="project" value="GO_Central"/>
</dbReference>
<dbReference type="CDD" id="cd00407">
    <property type="entry name" value="Urease_beta"/>
    <property type="match status" value="1"/>
</dbReference>
<dbReference type="FunFam" id="2.10.150.10:FF:000001">
    <property type="entry name" value="Urease subunit beta"/>
    <property type="match status" value="1"/>
</dbReference>
<dbReference type="Gene3D" id="2.10.150.10">
    <property type="entry name" value="Urease, beta subunit"/>
    <property type="match status" value="1"/>
</dbReference>
<dbReference type="HAMAP" id="MF_01954">
    <property type="entry name" value="Urease_beta"/>
    <property type="match status" value="1"/>
</dbReference>
<dbReference type="InterPro" id="IPR002019">
    <property type="entry name" value="Urease_beta-like"/>
</dbReference>
<dbReference type="InterPro" id="IPR036461">
    <property type="entry name" value="Urease_betasu_sf"/>
</dbReference>
<dbReference type="InterPro" id="IPR050069">
    <property type="entry name" value="Urease_subunit"/>
</dbReference>
<dbReference type="NCBIfam" id="NF009682">
    <property type="entry name" value="PRK13203.1"/>
    <property type="match status" value="1"/>
</dbReference>
<dbReference type="NCBIfam" id="TIGR00192">
    <property type="entry name" value="urease_beta"/>
    <property type="match status" value="1"/>
</dbReference>
<dbReference type="PANTHER" id="PTHR33569">
    <property type="entry name" value="UREASE"/>
    <property type="match status" value="1"/>
</dbReference>
<dbReference type="PANTHER" id="PTHR33569:SF1">
    <property type="entry name" value="UREASE"/>
    <property type="match status" value="1"/>
</dbReference>
<dbReference type="Pfam" id="PF00699">
    <property type="entry name" value="Urease_beta"/>
    <property type="match status" value="1"/>
</dbReference>
<dbReference type="SUPFAM" id="SSF51278">
    <property type="entry name" value="Urease, beta-subunit"/>
    <property type="match status" value="1"/>
</dbReference>
<protein>
    <recommendedName>
        <fullName evidence="1">Urease subunit beta</fullName>
        <ecNumber evidence="1">3.5.1.5</ecNumber>
    </recommendedName>
    <alternativeName>
        <fullName evidence="1">Urea amidohydrolase subunit beta</fullName>
    </alternativeName>
</protein>
<organism>
    <name type="scientific">Bacillus subtilis (strain 168)</name>
    <dbReference type="NCBI Taxonomy" id="224308"/>
    <lineage>
        <taxon>Bacteria</taxon>
        <taxon>Bacillati</taxon>
        <taxon>Bacillota</taxon>
        <taxon>Bacilli</taxon>
        <taxon>Bacillales</taxon>
        <taxon>Bacillaceae</taxon>
        <taxon>Bacillus</taxon>
    </lineage>
</organism>
<accession>P71035</accession>
<keyword id="KW-0963">Cytoplasm</keyword>
<keyword id="KW-0378">Hydrolase</keyword>
<keyword id="KW-1185">Reference proteome</keyword>